<proteinExistence type="inferred from homology"/>
<reference key="1">
    <citation type="journal article" date="1996" name="Science">
        <title>Complete genome sequence of the methanogenic archaeon, Methanococcus jannaschii.</title>
        <authorList>
            <person name="Bult C.J."/>
            <person name="White O."/>
            <person name="Olsen G.J."/>
            <person name="Zhou L."/>
            <person name="Fleischmann R.D."/>
            <person name="Sutton G.G."/>
            <person name="Blake J.A."/>
            <person name="FitzGerald L.M."/>
            <person name="Clayton R.A."/>
            <person name="Gocayne J.D."/>
            <person name="Kerlavage A.R."/>
            <person name="Dougherty B.A."/>
            <person name="Tomb J.-F."/>
            <person name="Adams M.D."/>
            <person name="Reich C.I."/>
            <person name="Overbeek R."/>
            <person name="Kirkness E.F."/>
            <person name="Weinstock K.G."/>
            <person name="Merrick J.M."/>
            <person name="Glodek A."/>
            <person name="Scott J.L."/>
            <person name="Geoghagen N.S.M."/>
            <person name="Weidman J.F."/>
            <person name="Fuhrmann J.L."/>
            <person name="Nguyen D."/>
            <person name="Utterback T.R."/>
            <person name="Kelley J.M."/>
            <person name="Peterson J.D."/>
            <person name="Sadow P.W."/>
            <person name="Hanna M.C."/>
            <person name="Cotton M.D."/>
            <person name="Roberts K.M."/>
            <person name="Hurst M.A."/>
            <person name="Kaine B.P."/>
            <person name="Borodovsky M."/>
            <person name="Klenk H.-P."/>
            <person name="Fraser C.M."/>
            <person name="Smith H.O."/>
            <person name="Woese C.R."/>
            <person name="Venter J.C."/>
        </authorList>
    </citation>
    <scope>NUCLEOTIDE SEQUENCE [LARGE SCALE GENOMIC DNA]</scope>
    <source>
        <strain>ATCC 43067 / DSM 2661 / JAL-1 / JCM 10045 / NBRC 100440</strain>
    </source>
</reference>
<gene>
    <name evidence="1" type="primary">rpo6</name>
    <name evidence="1 2" type="synonym">rpoK</name>
    <name type="ordered locus">MJ0197</name>
</gene>
<accession>Q57650</accession>
<comment type="function">
    <text evidence="1">DNA-dependent RNA polymerase (RNAP) catalyzes the transcription of DNA into RNA using the four ribonucleoside triphosphates as substrates.</text>
</comment>
<comment type="catalytic activity">
    <reaction evidence="1">
        <text>RNA(n) + a ribonucleoside 5'-triphosphate = RNA(n+1) + diphosphate</text>
        <dbReference type="Rhea" id="RHEA:21248"/>
        <dbReference type="Rhea" id="RHEA-COMP:14527"/>
        <dbReference type="Rhea" id="RHEA-COMP:17342"/>
        <dbReference type="ChEBI" id="CHEBI:33019"/>
        <dbReference type="ChEBI" id="CHEBI:61557"/>
        <dbReference type="ChEBI" id="CHEBI:140395"/>
        <dbReference type="EC" id="2.7.7.6"/>
    </reaction>
</comment>
<comment type="subunit">
    <text evidence="1">Part of the RNA polymerase complex.</text>
</comment>
<comment type="subcellular location">
    <subcellularLocation>
        <location evidence="1">Cytoplasm</location>
    </subcellularLocation>
</comment>
<comment type="similarity">
    <text evidence="1">Belongs to the archaeal Rpo6/eukaryotic RPB6 RNA polymerase subunit family.</text>
</comment>
<protein>
    <recommendedName>
        <fullName evidence="1">DNA-directed RNA polymerase subunit Rpo6</fullName>
        <ecNumber evidence="1">2.7.7.6</ecNumber>
    </recommendedName>
    <alternativeName>
        <fullName evidence="1">DNA-directed RNA polymerase subunit K</fullName>
    </alternativeName>
</protein>
<feature type="chain" id="PRO_0000133813" description="DNA-directed RNA polymerase subunit Rpo6">
    <location>
        <begin position="1"/>
        <end position="57"/>
    </location>
</feature>
<dbReference type="EC" id="2.7.7.6" evidence="1"/>
<dbReference type="EMBL" id="L77117">
    <property type="protein sequence ID" value="AAB98177.1"/>
    <property type="molecule type" value="Genomic_DNA"/>
</dbReference>
<dbReference type="PIR" id="F64324">
    <property type="entry name" value="F64324"/>
</dbReference>
<dbReference type="RefSeq" id="WP_010869692.1">
    <property type="nucleotide sequence ID" value="NC_000909.1"/>
</dbReference>
<dbReference type="SMR" id="Q57650"/>
<dbReference type="STRING" id="243232.MJ_0197"/>
<dbReference type="PaxDb" id="243232-MJ_0197"/>
<dbReference type="EnsemblBacteria" id="AAB98177">
    <property type="protein sequence ID" value="AAB98177"/>
    <property type="gene ID" value="MJ_0197"/>
</dbReference>
<dbReference type="GeneID" id="1451046"/>
<dbReference type="KEGG" id="mja:MJ_0197"/>
<dbReference type="eggNOG" id="arCOG01268">
    <property type="taxonomic scope" value="Archaea"/>
</dbReference>
<dbReference type="HOGENOM" id="CLU_112527_5_1_2"/>
<dbReference type="InParanoid" id="Q57650"/>
<dbReference type="OrthoDB" id="10567at2157"/>
<dbReference type="PhylomeDB" id="Q57650"/>
<dbReference type="Proteomes" id="UP000000805">
    <property type="component" value="Chromosome"/>
</dbReference>
<dbReference type="GO" id="GO:0005737">
    <property type="term" value="C:cytoplasm"/>
    <property type="evidence" value="ECO:0007669"/>
    <property type="project" value="UniProtKB-SubCell"/>
</dbReference>
<dbReference type="GO" id="GO:0000428">
    <property type="term" value="C:DNA-directed RNA polymerase complex"/>
    <property type="evidence" value="ECO:0007669"/>
    <property type="project" value="UniProtKB-KW"/>
</dbReference>
<dbReference type="GO" id="GO:0003677">
    <property type="term" value="F:DNA binding"/>
    <property type="evidence" value="ECO:0007669"/>
    <property type="project" value="UniProtKB-UniRule"/>
</dbReference>
<dbReference type="GO" id="GO:0003899">
    <property type="term" value="F:DNA-directed RNA polymerase activity"/>
    <property type="evidence" value="ECO:0007669"/>
    <property type="project" value="UniProtKB-UniRule"/>
</dbReference>
<dbReference type="GO" id="GO:0006351">
    <property type="term" value="P:DNA-templated transcription"/>
    <property type="evidence" value="ECO:0007669"/>
    <property type="project" value="UniProtKB-UniRule"/>
</dbReference>
<dbReference type="Gene3D" id="3.90.940.10">
    <property type="match status" value="1"/>
</dbReference>
<dbReference type="HAMAP" id="MF_00192">
    <property type="entry name" value="RNApol_arch_Rpo6"/>
    <property type="match status" value="1"/>
</dbReference>
<dbReference type="InterPro" id="IPR020708">
    <property type="entry name" value="DNA-dir_RNA_polK_14-18kDa_CS"/>
</dbReference>
<dbReference type="InterPro" id="IPR006110">
    <property type="entry name" value="Pol_omega/Rpo6/RPB6"/>
</dbReference>
<dbReference type="InterPro" id="IPR036161">
    <property type="entry name" value="RPB6/omega-like_sf"/>
</dbReference>
<dbReference type="InterPro" id="IPR006111">
    <property type="entry name" value="Rpo6/Rpb6"/>
</dbReference>
<dbReference type="NCBIfam" id="NF002206">
    <property type="entry name" value="PRK01099.1-1"/>
    <property type="match status" value="1"/>
</dbReference>
<dbReference type="Pfam" id="PF01192">
    <property type="entry name" value="RNA_pol_Rpb6"/>
    <property type="match status" value="1"/>
</dbReference>
<dbReference type="PIRSF" id="PIRSF000778">
    <property type="entry name" value="RpoK/RPB6"/>
    <property type="match status" value="1"/>
</dbReference>
<dbReference type="SMART" id="SM01409">
    <property type="entry name" value="RNA_pol_Rpb6"/>
    <property type="match status" value="1"/>
</dbReference>
<dbReference type="SUPFAM" id="SSF63562">
    <property type="entry name" value="RPB6/omega subunit-like"/>
    <property type="match status" value="1"/>
</dbReference>
<dbReference type="PROSITE" id="PS01111">
    <property type="entry name" value="RNA_POL_K_14KD"/>
    <property type="match status" value="1"/>
</dbReference>
<evidence type="ECO:0000255" key="1">
    <source>
        <dbReference type="HAMAP-Rule" id="MF_00192"/>
    </source>
</evidence>
<evidence type="ECO:0000303" key="2">
    <source>
    </source>
</evidence>
<sequence length="57" mass="6292">MKLTKFEIARILGARSLQISSGAYATIETKCDSSLKIAYEEIKQGKVPLKPIRPVKA</sequence>
<name>RPO6_METJA</name>
<keyword id="KW-0963">Cytoplasm</keyword>
<keyword id="KW-0240">DNA-directed RNA polymerase</keyword>
<keyword id="KW-0548">Nucleotidyltransferase</keyword>
<keyword id="KW-1185">Reference proteome</keyword>
<keyword id="KW-0804">Transcription</keyword>
<keyword id="KW-0808">Transferase</keyword>
<organism>
    <name type="scientific">Methanocaldococcus jannaschii (strain ATCC 43067 / DSM 2661 / JAL-1 / JCM 10045 / NBRC 100440)</name>
    <name type="common">Methanococcus jannaschii</name>
    <dbReference type="NCBI Taxonomy" id="243232"/>
    <lineage>
        <taxon>Archaea</taxon>
        <taxon>Methanobacteriati</taxon>
        <taxon>Methanobacteriota</taxon>
        <taxon>Methanomada group</taxon>
        <taxon>Methanococci</taxon>
        <taxon>Methanococcales</taxon>
        <taxon>Methanocaldococcaceae</taxon>
        <taxon>Methanocaldococcus</taxon>
    </lineage>
</organism>